<sequence length="262" mass="28971">MNILVVKTPEELAEAGYKLIEEVVKTKENPTLGMATGSSPLGIYAEMRKNKLDTSRVTTVNLDEYVNLPHEDKNSYHYFMQEQLFDHLPFKQTYVPNGMASDLEEECKRYEGILAANPVDLQILGIGENGHIGFNEPGTPFNSPTNIVELTESTRQANLRFFEKEEDVPTHAITMGIGSIMKAKQILLVAMGSKKAEAVKELLQGAYSEACPATVLQRHPNVTVIADQEALSLCSEAIADEHRQVFTISDLLSDSRVGETAN</sequence>
<comment type="function">
    <text evidence="1">Catalyzes the reversible isomerization-deamination of glucosamine 6-phosphate (GlcN6P) to form fructose 6-phosphate (Fru6P) and ammonium ion.</text>
</comment>
<comment type="catalytic activity">
    <reaction evidence="1">
        <text>alpha-D-glucosamine 6-phosphate + H2O = beta-D-fructose 6-phosphate + NH4(+)</text>
        <dbReference type="Rhea" id="RHEA:12172"/>
        <dbReference type="ChEBI" id="CHEBI:15377"/>
        <dbReference type="ChEBI" id="CHEBI:28938"/>
        <dbReference type="ChEBI" id="CHEBI:57634"/>
        <dbReference type="ChEBI" id="CHEBI:75989"/>
        <dbReference type="EC" id="3.5.99.6"/>
    </reaction>
</comment>
<comment type="pathway">
    <text evidence="1">Amino-sugar metabolism; N-acetylneuraminate degradation; D-fructose 6-phosphate from N-acetylneuraminate: step 5/5.</text>
</comment>
<comment type="similarity">
    <text evidence="1">Belongs to the glucosamine/galactosamine-6-phosphate isomerase family. NagB subfamily.</text>
</comment>
<name>NAGB_BACAH</name>
<accession>A0RI59</accession>
<gene>
    <name evidence="1" type="primary">nagB</name>
    <name type="ordered locus">BALH_3670</name>
</gene>
<protein>
    <recommendedName>
        <fullName evidence="1">Glucosamine-6-phosphate deaminase</fullName>
        <ecNumber evidence="1">3.5.99.6</ecNumber>
    </recommendedName>
    <alternativeName>
        <fullName evidence="1">GlcN6P deaminase</fullName>
        <shortName evidence="1">GNPDA</shortName>
    </alternativeName>
    <alternativeName>
        <fullName evidence="1">Glucosamine-6-phosphate isomerase</fullName>
    </alternativeName>
</protein>
<organism>
    <name type="scientific">Bacillus thuringiensis (strain Al Hakam)</name>
    <dbReference type="NCBI Taxonomy" id="412694"/>
    <lineage>
        <taxon>Bacteria</taxon>
        <taxon>Bacillati</taxon>
        <taxon>Bacillota</taxon>
        <taxon>Bacilli</taxon>
        <taxon>Bacillales</taxon>
        <taxon>Bacillaceae</taxon>
        <taxon>Bacillus</taxon>
        <taxon>Bacillus cereus group</taxon>
    </lineage>
</organism>
<dbReference type="EC" id="3.5.99.6" evidence="1"/>
<dbReference type="EMBL" id="CP000485">
    <property type="protein sequence ID" value="ABK86902.1"/>
    <property type="molecule type" value="Genomic_DNA"/>
</dbReference>
<dbReference type="RefSeq" id="WP_001024206.1">
    <property type="nucleotide sequence ID" value="NC_008600.1"/>
</dbReference>
<dbReference type="SMR" id="A0RI59"/>
<dbReference type="GeneID" id="75087199"/>
<dbReference type="KEGG" id="btl:BALH_3670"/>
<dbReference type="HOGENOM" id="CLU_049611_1_0_9"/>
<dbReference type="UniPathway" id="UPA00629">
    <property type="reaction ID" value="UER00684"/>
</dbReference>
<dbReference type="GO" id="GO:0005737">
    <property type="term" value="C:cytoplasm"/>
    <property type="evidence" value="ECO:0007669"/>
    <property type="project" value="TreeGrafter"/>
</dbReference>
<dbReference type="GO" id="GO:0004342">
    <property type="term" value="F:glucosamine-6-phosphate deaminase activity"/>
    <property type="evidence" value="ECO:0007669"/>
    <property type="project" value="UniProtKB-UniRule"/>
</dbReference>
<dbReference type="GO" id="GO:0042802">
    <property type="term" value="F:identical protein binding"/>
    <property type="evidence" value="ECO:0007669"/>
    <property type="project" value="TreeGrafter"/>
</dbReference>
<dbReference type="GO" id="GO:0005975">
    <property type="term" value="P:carbohydrate metabolic process"/>
    <property type="evidence" value="ECO:0007669"/>
    <property type="project" value="InterPro"/>
</dbReference>
<dbReference type="GO" id="GO:0006043">
    <property type="term" value="P:glucosamine catabolic process"/>
    <property type="evidence" value="ECO:0007669"/>
    <property type="project" value="TreeGrafter"/>
</dbReference>
<dbReference type="GO" id="GO:0006046">
    <property type="term" value="P:N-acetylglucosamine catabolic process"/>
    <property type="evidence" value="ECO:0007669"/>
    <property type="project" value="TreeGrafter"/>
</dbReference>
<dbReference type="GO" id="GO:0019262">
    <property type="term" value="P:N-acetylneuraminate catabolic process"/>
    <property type="evidence" value="ECO:0007669"/>
    <property type="project" value="UniProtKB-UniRule"/>
</dbReference>
<dbReference type="CDD" id="cd01399">
    <property type="entry name" value="GlcN6P_deaminase"/>
    <property type="match status" value="1"/>
</dbReference>
<dbReference type="FunFam" id="3.40.50.1360:FF:000003">
    <property type="entry name" value="Glucosamine-6-phosphate deaminase"/>
    <property type="match status" value="1"/>
</dbReference>
<dbReference type="Gene3D" id="3.40.50.1360">
    <property type="match status" value="1"/>
</dbReference>
<dbReference type="HAMAP" id="MF_01241">
    <property type="entry name" value="GlcN6P_deamin"/>
    <property type="match status" value="1"/>
</dbReference>
<dbReference type="InterPro" id="IPR006148">
    <property type="entry name" value="Glc/Gal-6P_isomerase"/>
</dbReference>
<dbReference type="InterPro" id="IPR004547">
    <property type="entry name" value="Glucosamine6P_isomerase"/>
</dbReference>
<dbReference type="InterPro" id="IPR018321">
    <property type="entry name" value="Glucosamine6P_isomerase_CS"/>
</dbReference>
<dbReference type="InterPro" id="IPR037171">
    <property type="entry name" value="NagB/RpiA_transferase-like"/>
</dbReference>
<dbReference type="NCBIfam" id="TIGR00502">
    <property type="entry name" value="nagB"/>
    <property type="match status" value="1"/>
</dbReference>
<dbReference type="NCBIfam" id="NF001682">
    <property type="entry name" value="PRK00443.1-1"/>
    <property type="match status" value="1"/>
</dbReference>
<dbReference type="PANTHER" id="PTHR11280">
    <property type="entry name" value="GLUCOSAMINE-6-PHOSPHATE ISOMERASE"/>
    <property type="match status" value="1"/>
</dbReference>
<dbReference type="PANTHER" id="PTHR11280:SF5">
    <property type="entry name" value="GLUCOSAMINE-6-PHOSPHATE ISOMERASE"/>
    <property type="match status" value="1"/>
</dbReference>
<dbReference type="Pfam" id="PF01182">
    <property type="entry name" value="Glucosamine_iso"/>
    <property type="match status" value="1"/>
</dbReference>
<dbReference type="SUPFAM" id="SSF100950">
    <property type="entry name" value="NagB/RpiA/CoA transferase-like"/>
    <property type="match status" value="1"/>
</dbReference>
<dbReference type="PROSITE" id="PS01161">
    <property type="entry name" value="GLC_GALNAC_ISOMERASE"/>
    <property type="match status" value="1"/>
</dbReference>
<reference key="1">
    <citation type="journal article" date="2007" name="J. Bacteriol.">
        <title>The complete genome sequence of Bacillus thuringiensis Al Hakam.</title>
        <authorList>
            <person name="Challacombe J.F."/>
            <person name="Altherr M.R."/>
            <person name="Xie G."/>
            <person name="Bhotika S.S."/>
            <person name="Brown N."/>
            <person name="Bruce D."/>
            <person name="Campbell C.S."/>
            <person name="Campbell M.L."/>
            <person name="Chen J."/>
            <person name="Chertkov O."/>
            <person name="Cleland C."/>
            <person name="Dimitrijevic M."/>
            <person name="Doggett N.A."/>
            <person name="Fawcett J.J."/>
            <person name="Glavina T."/>
            <person name="Goodwin L.A."/>
            <person name="Green L.D."/>
            <person name="Han C.S."/>
            <person name="Hill K.K."/>
            <person name="Hitchcock P."/>
            <person name="Jackson P.J."/>
            <person name="Keim P."/>
            <person name="Kewalramani A.R."/>
            <person name="Longmire J."/>
            <person name="Lucas S."/>
            <person name="Malfatti S."/>
            <person name="Martinez D."/>
            <person name="McMurry K."/>
            <person name="Meincke L.J."/>
            <person name="Misra M."/>
            <person name="Moseman B.L."/>
            <person name="Mundt M."/>
            <person name="Munk A.C."/>
            <person name="Okinaka R.T."/>
            <person name="Parson-Quintana B."/>
            <person name="Reilly L.P."/>
            <person name="Richardson P."/>
            <person name="Robinson D.L."/>
            <person name="Saunders E."/>
            <person name="Tapia R."/>
            <person name="Tesmer J.G."/>
            <person name="Thayer N."/>
            <person name="Thompson L.S."/>
            <person name="Tice H."/>
            <person name="Ticknor L.O."/>
            <person name="Wills P.L."/>
            <person name="Gilna P."/>
            <person name="Brettin T.S."/>
        </authorList>
    </citation>
    <scope>NUCLEOTIDE SEQUENCE [LARGE SCALE GENOMIC DNA]</scope>
    <source>
        <strain>Al Hakam</strain>
    </source>
</reference>
<evidence type="ECO:0000255" key="1">
    <source>
        <dbReference type="HAMAP-Rule" id="MF_01241"/>
    </source>
</evidence>
<proteinExistence type="inferred from homology"/>
<feature type="chain" id="PRO_1000066954" description="Glucosamine-6-phosphate deaminase">
    <location>
        <begin position="1"/>
        <end position="262"/>
    </location>
</feature>
<feature type="active site" description="Proton acceptor; for enolization step" evidence="1">
    <location>
        <position position="63"/>
    </location>
</feature>
<feature type="active site" description="For ring-opening step" evidence="1">
    <location>
        <position position="129"/>
    </location>
</feature>
<feature type="active site" description="Proton acceptor; for ring-opening step" evidence="1">
    <location>
        <position position="131"/>
    </location>
</feature>
<feature type="active site" description="For ring-opening step" evidence="1">
    <location>
        <position position="136"/>
    </location>
</feature>
<keyword id="KW-0119">Carbohydrate metabolism</keyword>
<keyword id="KW-0378">Hydrolase</keyword>